<organism>
    <name type="scientific">Pyrobaculum aerophilum (strain ATCC 51768 / DSM 7523 / JCM 9630 / CIP 104966 / NBRC 100827 / IM2)</name>
    <dbReference type="NCBI Taxonomy" id="178306"/>
    <lineage>
        <taxon>Archaea</taxon>
        <taxon>Thermoproteota</taxon>
        <taxon>Thermoprotei</taxon>
        <taxon>Thermoproteales</taxon>
        <taxon>Thermoproteaceae</taxon>
        <taxon>Pyrobaculum</taxon>
    </lineage>
</organism>
<sequence>MTVPRVRSYVPGLDEILFGGIPERSVVLLSGGPGTGKSILGKQFLYNGLKRGDAGVFVALEEHPVAVRRSFRHFGWDIAQYEREGKFAIVDAFTGGVGTAAQRERYIVKQVDDVHELSDVLRQAIRDTGARRVVIDSVSTLYLTKPAVARGTIMTLKRVIAGLGCTAFFVSQVSVGERGFGGPGVEHAVDGIIRLDLDEFDGRLYRSIIVWKMRDTKHSMVRHPMEIKDGGIEIMWDKYIKITGSSVRIEPLPKEEAEAMRKAVEDVEKQPAPKKIEIEEE</sequence>
<accession>Q8ZTQ5</accession>
<dbReference type="EMBL" id="AE009441">
    <property type="protein sequence ID" value="AAL64704.1"/>
    <property type="molecule type" value="Genomic_DNA"/>
</dbReference>
<dbReference type="RefSeq" id="WP_011009172.1">
    <property type="nucleotide sequence ID" value="NC_003364.1"/>
</dbReference>
<dbReference type="SMR" id="Q8ZTQ5"/>
<dbReference type="STRING" id="178306.PAE3143"/>
<dbReference type="EnsemblBacteria" id="AAL64704">
    <property type="protein sequence ID" value="AAL64704"/>
    <property type="gene ID" value="PAE3143"/>
</dbReference>
<dbReference type="GeneID" id="1463883"/>
<dbReference type="KEGG" id="pai:PAE3143"/>
<dbReference type="PATRIC" id="fig|178306.9.peg.2363"/>
<dbReference type="eggNOG" id="arCOG01171">
    <property type="taxonomic scope" value="Archaea"/>
</dbReference>
<dbReference type="HOGENOM" id="CLU_023669_2_0_2"/>
<dbReference type="InParanoid" id="Q8ZTQ5"/>
<dbReference type="Proteomes" id="UP000002439">
    <property type="component" value="Chromosome"/>
</dbReference>
<dbReference type="GO" id="GO:0005524">
    <property type="term" value="F:ATP binding"/>
    <property type="evidence" value="ECO:0007669"/>
    <property type="project" value="UniProtKB-UniRule"/>
</dbReference>
<dbReference type="CDD" id="cd19486">
    <property type="entry name" value="KaiC_arch"/>
    <property type="match status" value="1"/>
</dbReference>
<dbReference type="Gene3D" id="3.40.50.300">
    <property type="entry name" value="P-loop containing nucleotide triphosphate hydrolases"/>
    <property type="match status" value="1"/>
</dbReference>
<dbReference type="HAMAP" id="MF_01076">
    <property type="entry name" value="UPF0273"/>
    <property type="match status" value="1"/>
</dbReference>
<dbReference type="InterPro" id="IPR014774">
    <property type="entry name" value="KaiC-like_dom"/>
</dbReference>
<dbReference type="InterPro" id="IPR010624">
    <property type="entry name" value="KaiC_dom"/>
</dbReference>
<dbReference type="InterPro" id="IPR027417">
    <property type="entry name" value="P-loop_NTPase"/>
</dbReference>
<dbReference type="InterPro" id="IPR022475">
    <property type="entry name" value="UPF0273_KaiC-like"/>
</dbReference>
<dbReference type="NCBIfam" id="TIGR03877">
    <property type="entry name" value="thermo_KaiC_1"/>
    <property type="match status" value="1"/>
</dbReference>
<dbReference type="PANTHER" id="PTHR43637">
    <property type="entry name" value="UPF0273 PROTEIN TM_0370"/>
    <property type="match status" value="1"/>
</dbReference>
<dbReference type="PANTHER" id="PTHR43637:SF1">
    <property type="entry name" value="UPF0273 PROTEIN TM_0370"/>
    <property type="match status" value="1"/>
</dbReference>
<dbReference type="Pfam" id="PF06745">
    <property type="entry name" value="ATPase"/>
    <property type="match status" value="1"/>
</dbReference>
<dbReference type="PRINTS" id="PR01874">
    <property type="entry name" value="DNAREPAIRADA"/>
</dbReference>
<dbReference type="SUPFAM" id="SSF52540">
    <property type="entry name" value="P-loop containing nucleoside triphosphate hydrolases"/>
    <property type="match status" value="1"/>
</dbReference>
<dbReference type="PROSITE" id="PS51146">
    <property type="entry name" value="KAIC"/>
    <property type="match status" value="1"/>
</dbReference>
<evidence type="ECO:0000255" key="1">
    <source>
        <dbReference type="HAMAP-Rule" id="MF_01076"/>
    </source>
</evidence>
<comment type="similarity">
    <text evidence="1">Belongs to the UPF0273 family.</text>
</comment>
<gene>
    <name type="ordered locus">PAE3143</name>
</gene>
<protein>
    <recommendedName>
        <fullName evidence="1">UPF0273 protein PAE3143</fullName>
    </recommendedName>
</protein>
<proteinExistence type="inferred from homology"/>
<reference key="1">
    <citation type="journal article" date="2002" name="Proc. Natl. Acad. Sci. U.S.A.">
        <title>Genome sequence of the hyperthermophilic crenarchaeon Pyrobaculum aerophilum.</title>
        <authorList>
            <person name="Fitz-Gibbon S.T."/>
            <person name="Ladner H."/>
            <person name="Kim U.-J."/>
            <person name="Stetter K.O."/>
            <person name="Simon M.I."/>
            <person name="Miller J.H."/>
        </authorList>
    </citation>
    <scope>NUCLEOTIDE SEQUENCE [LARGE SCALE GENOMIC DNA]</scope>
    <source>
        <strain>ATCC 51768 / DSM 7523 / JCM 9630 / CIP 104966 / NBRC 100827 / IM2</strain>
    </source>
</reference>
<feature type="chain" id="PRO_0000184588" description="UPF0273 protein PAE3143">
    <location>
        <begin position="1"/>
        <end position="281"/>
    </location>
</feature>
<feature type="domain" description="KaiC" evidence="1">
    <location>
        <begin position="4"/>
        <end position="248"/>
    </location>
</feature>
<feature type="binding site" evidence="1">
    <location>
        <begin position="31"/>
        <end position="38"/>
    </location>
    <ligand>
        <name>ATP</name>
        <dbReference type="ChEBI" id="CHEBI:30616"/>
    </ligand>
</feature>
<keyword id="KW-0067">ATP-binding</keyword>
<keyword id="KW-0547">Nucleotide-binding</keyword>
<keyword id="KW-1185">Reference proteome</keyword>
<name>Y3143_PYRAE</name>